<reference key="1">
    <citation type="journal article" date="2005" name="Proc. Natl. Acad. Sci. U.S.A.">
        <title>Whole genome sequence of Staphylococcus saprophyticus reveals the pathogenesis of uncomplicated urinary tract infection.</title>
        <authorList>
            <person name="Kuroda M."/>
            <person name="Yamashita A."/>
            <person name="Hirakawa H."/>
            <person name="Kumano M."/>
            <person name="Morikawa K."/>
            <person name="Higashide M."/>
            <person name="Maruyama A."/>
            <person name="Inose Y."/>
            <person name="Matoba K."/>
            <person name="Toh H."/>
            <person name="Kuhara S."/>
            <person name="Hattori M."/>
            <person name="Ohta T."/>
        </authorList>
    </citation>
    <scope>NUCLEOTIDE SEQUENCE [LARGE SCALE GENOMIC DNA]</scope>
    <source>
        <strain>ATCC 15305 / DSM 20229 / NCIMB 8711 / NCTC 7292 / S-41</strain>
    </source>
</reference>
<name>PTXBC_STAS1</name>
<keyword id="KW-1003">Cell membrane</keyword>
<keyword id="KW-0418">Kinase</keyword>
<keyword id="KW-0472">Membrane</keyword>
<keyword id="KW-0598">Phosphotransferase system</keyword>
<keyword id="KW-1185">Reference proteome</keyword>
<keyword id="KW-0762">Sugar transport</keyword>
<keyword id="KW-0808">Transferase</keyword>
<keyword id="KW-0812">Transmembrane</keyword>
<keyword id="KW-1133">Transmembrane helix</keyword>
<keyword id="KW-0813">Transport</keyword>
<evidence type="ECO:0000250" key="1">
    <source>
        <dbReference type="UniProtKB" id="Q2FK70"/>
    </source>
</evidence>
<evidence type="ECO:0000255" key="2">
    <source>
        <dbReference type="PROSITE-ProRule" id="PRU00421"/>
    </source>
</evidence>
<evidence type="ECO:0000255" key="3">
    <source>
        <dbReference type="PROSITE-ProRule" id="PRU00426"/>
    </source>
</evidence>
<accession>Q49ZN7</accession>
<feature type="chain" id="PRO_0000272184" description="PTS system MurNAc-GlcNAc-specific EIIBC component">
    <location>
        <begin position="1"/>
        <end position="479"/>
    </location>
</feature>
<feature type="transmembrane region" description="Helical" evidence="3">
    <location>
        <begin position="130"/>
        <end position="150"/>
    </location>
</feature>
<feature type="transmembrane region" description="Helical" evidence="3">
    <location>
        <begin position="169"/>
        <end position="189"/>
    </location>
</feature>
<feature type="transmembrane region" description="Helical" evidence="3">
    <location>
        <begin position="195"/>
        <end position="215"/>
    </location>
</feature>
<feature type="transmembrane region" description="Helical" evidence="3">
    <location>
        <begin position="229"/>
        <end position="249"/>
    </location>
</feature>
<feature type="transmembrane region" description="Helical" evidence="3">
    <location>
        <begin position="269"/>
        <end position="289"/>
    </location>
</feature>
<feature type="transmembrane region" description="Helical" evidence="3">
    <location>
        <begin position="303"/>
        <end position="323"/>
    </location>
</feature>
<feature type="transmembrane region" description="Helical" evidence="3">
    <location>
        <begin position="344"/>
        <end position="364"/>
    </location>
</feature>
<feature type="transmembrane region" description="Helical" evidence="3">
    <location>
        <begin position="379"/>
        <end position="399"/>
    </location>
</feature>
<feature type="transmembrane region" description="Helical" evidence="3">
    <location>
        <begin position="403"/>
        <end position="423"/>
    </location>
</feature>
<feature type="transmembrane region" description="Helical" evidence="3">
    <location>
        <begin position="445"/>
        <end position="465"/>
    </location>
</feature>
<feature type="domain" description="PTS EIIB type-1" evidence="2">
    <location>
        <begin position="5"/>
        <end position="87"/>
    </location>
</feature>
<feature type="domain" description="PTS EIIC type-1" evidence="3">
    <location>
        <begin position="125"/>
        <end position="479"/>
    </location>
</feature>
<feature type="active site" description="Phosphocysteine intermediate; for EIIB activity" evidence="2">
    <location>
        <position position="27"/>
    </location>
</feature>
<sequence length="479" mass="50455">MTKEQILAEHIIDAVGGIDNMDNIINCMTRVRIKVLDEDKIDYEQLKSIKGVMGVVKDDRVQVVVGPGTVNKVASHMSELSGAPLGETIKHKSKDYRANAEAQAQANKSEFQSKQKRGKFNKLLKTIANIFIPLIPAFIGAGLIGGIAAVLSNLLAAGQISGEWVTQLVTVFNVIKDGMLAYLAIFTGINAAKEFGATPGLGGVIGGTTLLTGLTDKNMITNIFTGEPLQPGQGGIIGVIFAVWLLSIIEKRLHKIVPNSIDIIVTPTITLFIIGLLTIFIFMPLAGFVSDGLVTVINGIIDIGGVFSGFIIGAFFLPLVMLGLHHMFTPIHIEMINQTGATYLLPIAAMAGAGQVGAALALWVRCRKNTTLRDTLKGALPVGFLGIGEPLIYGVTLPLGKPFITACIGGGIGGAVIGGIGHIGATAIGPSGISLLPLISDHMYLGYIAGLLVAYAGGFIFTYFFGTTKAMRESDTLGD</sequence>
<gene>
    <name type="ordered locus">SSP0594</name>
</gene>
<comment type="function">
    <text evidence="1">The phosphoenolpyruvate-dependent sugar phosphotransferase system (sugar PTS), a major carbohydrate active transport system, catalyzes the phosphorylation of incoming sugar substrates concomitantly with their translocation across the cell membrane. This system is involved in the uptake and phosphorylation of MurNAc-GlcNAc, the principle peptidoglycan turnover product of S.aureus, yielding cytoplasmic MurNAc 6P-GlcNAc.</text>
</comment>
<comment type="catalytic activity">
    <reaction evidence="1">
        <text>N-acetyl-beta-D-muramate-(1-&gt;4)-N-acetyl-D-glucosamine(out) + N(pros)-phospho-L-histidyl-[protein] = 6-phospho-N-acetyl-beta-D-muramate-(1-&gt;4)-N-acetyl-D-glucosamine(in) + L-histidyl-[protein]</text>
        <dbReference type="Rhea" id="RHEA:66784"/>
        <dbReference type="Rhea" id="RHEA-COMP:9745"/>
        <dbReference type="Rhea" id="RHEA-COMP:9746"/>
        <dbReference type="ChEBI" id="CHEBI:29979"/>
        <dbReference type="ChEBI" id="CHEBI:64837"/>
        <dbReference type="ChEBI" id="CHEBI:167476"/>
        <dbReference type="ChEBI" id="CHEBI:167477"/>
    </reaction>
    <physiologicalReaction direction="left-to-right" evidence="1">
        <dbReference type="Rhea" id="RHEA:66785"/>
    </physiologicalReaction>
</comment>
<comment type="pathway">
    <text evidence="1">Cell wall biogenesis; peptidoglycan recycling.</text>
</comment>
<comment type="subcellular location">
    <subcellularLocation>
        <location evidence="3">Cell membrane</location>
        <topology evidence="3">Multi-pass membrane protein</topology>
    </subcellularLocation>
</comment>
<comment type="domain">
    <text>The EIIB domain is phosphorylated by phospho-EIIA on a cysteinyl or histidyl residue, depending on the transported sugar. Then, it transfers the phosphoryl group to the sugar substrate concomitantly with the sugar uptake processed by the EIIC domain.</text>
</comment>
<comment type="domain">
    <text>The EIIC domain forms the PTS system translocation channel and contains the specific substrate-binding site.</text>
</comment>
<proteinExistence type="inferred from homology"/>
<organism>
    <name type="scientific">Staphylococcus saprophyticus subsp. saprophyticus (strain ATCC 15305 / DSM 20229 / NCIMB 8711 / NCTC 7292 / S-41)</name>
    <dbReference type="NCBI Taxonomy" id="342451"/>
    <lineage>
        <taxon>Bacteria</taxon>
        <taxon>Bacillati</taxon>
        <taxon>Bacillota</taxon>
        <taxon>Bacilli</taxon>
        <taxon>Bacillales</taxon>
        <taxon>Staphylococcaceae</taxon>
        <taxon>Staphylococcus</taxon>
    </lineage>
</organism>
<protein>
    <recommendedName>
        <fullName evidence="1">PTS system MurNAc-GlcNAc-specific EIIBC component</fullName>
    </recommendedName>
    <domain>
        <recommendedName>
            <fullName>MurNAc-GlcNAc-specific phosphotransferase enzyme IIB component</fullName>
            <ecNumber evidence="1">2.7.1.-</ecNumber>
        </recommendedName>
        <alternativeName>
            <fullName>PTS system MurNAc-GlcNAc-specific EIIB component</fullName>
        </alternativeName>
    </domain>
    <domain>
        <recommendedName>
            <fullName>MurNAc-GlcNAc permease IIC component</fullName>
        </recommendedName>
        <alternativeName>
            <fullName>PTS system MurNAc-GlcNAc-specific EIIC component</fullName>
        </alternativeName>
    </domain>
</protein>
<dbReference type="EC" id="2.7.1.-" evidence="1"/>
<dbReference type="EMBL" id="AP008934">
    <property type="protein sequence ID" value="BAE17739.1"/>
    <property type="molecule type" value="Genomic_DNA"/>
</dbReference>
<dbReference type="RefSeq" id="WP_011302539.1">
    <property type="nucleotide sequence ID" value="NZ_MTGA01000036.1"/>
</dbReference>
<dbReference type="SMR" id="Q49ZN7"/>
<dbReference type="GeneID" id="3616088"/>
<dbReference type="KEGG" id="ssp:SSP0594"/>
<dbReference type="PATRIC" id="fig|342451.11.peg.599"/>
<dbReference type="eggNOG" id="COG1263">
    <property type="taxonomic scope" value="Bacteria"/>
</dbReference>
<dbReference type="eggNOG" id="COG1264">
    <property type="taxonomic scope" value="Bacteria"/>
</dbReference>
<dbReference type="HOGENOM" id="CLU_012312_2_0_9"/>
<dbReference type="OrthoDB" id="9769191at2"/>
<dbReference type="UniPathway" id="UPA00544"/>
<dbReference type="Proteomes" id="UP000006371">
    <property type="component" value="Chromosome"/>
</dbReference>
<dbReference type="GO" id="GO:0005886">
    <property type="term" value="C:plasma membrane"/>
    <property type="evidence" value="ECO:0007669"/>
    <property type="project" value="UniProtKB-SubCell"/>
</dbReference>
<dbReference type="GO" id="GO:0016301">
    <property type="term" value="F:kinase activity"/>
    <property type="evidence" value="ECO:0007669"/>
    <property type="project" value="UniProtKB-KW"/>
</dbReference>
<dbReference type="GO" id="GO:0008982">
    <property type="term" value="F:protein-N(PI)-phosphohistidine-sugar phosphotransferase activity"/>
    <property type="evidence" value="ECO:0007669"/>
    <property type="project" value="InterPro"/>
</dbReference>
<dbReference type="GO" id="GO:0090588">
    <property type="term" value="F:protein-phosphocysteine-N-acetylmuramate phosphotransferase system transporter activity"/>
    <property type="evidence" value="ECO:0007669"/>
    <property type="project" value="TreeGrafter"/>
</dbReference>
<dbReference type="GO" id="GO:0009254">
    <property type="term" value="P:peptidoglycan turnover"/>
    <property type="evidence" value="ECO:0007669"/>
    <property type="project" value="UniProtKB-UniPathway"/>
</dbReference>
<dbReference type="GO" id="GO:0009401">
    <property type="term" value="P:phosphoenolpyruvate-dependent sugar phosphotransferase system"/>
    <property type="evidence" value="ECO:0007669"/>
    <property type="project" value="UniProtKB-KW"/>
</dbReference>
<dbReference type="CDD" id="cd00212">
    <property type="entry name" value="PTS_IIB_glc"/>
    <property type="match status" value="1"/>
</dbReference>
<dbReference type="FunFam" id="3.30.1360.60:FF:000001">
    <property type="entry name" value="PTS system glucose-specific IIBC component PtsG"/>
    <property type="match status" value="1"/>
</dbReference>
<dbReference type="Gene3D" id="3.30.1360.60">
    <property type="entry name" value="Glucose permease domain IIB"/>
    <property type="match status" value="1"/>
</dbReference>
<dbReference type="InterPro" id="IPR036878">
    <property type="entry name" value="Glu_permease_IIB"/>
</dbReference>
<dbReference type="InterPro" id="IPR018113">
    <property type="entry name" value="PTrfase_EIIB_Cys"/>
</dbReference>
<dbReference type="InterPro" id="IPR003352">
    <property type="entry name" value="PTS_EIIC"/>
</dbReference>
<dbReference type="InterPro" id="IPR013013">
    <property type="entry name" value="PTS_EIIC_1"/>
</dbReference>
<dbReference type="InterPro" id="IPR001996">
    <property type="entry name" value="PTS_IIB_1"/>
</dbReference>
<dbReference type="InterPro" id="IPR050558">
    <property type="entry name" value="PTS_Sugar-Specific_Components"/>
</dbReference>
<dbReference type="PANTHER" id="PTHR30175">
    <property type="entry name" value="PHOSPHOTRANSFERASE SYSTEM TRANSPORT PROTEIN"/>
    <property type="match status" value="1"/>
</dbReference>
<dbReference type="PANTHER" id="PTHR30175:SF3">
    <property type="entry name" value="PTS SYSTEM N-ACETYLMURAMIC ACID-SPECIFIC EIIBC COMPONENT"/>
    <property type="match status" value="1"/>
</dbReference>
<dbReference type="Pfam" id="PF00367">
    <property type="entry name" value="PTS_EIIB"/>
    <property type="match status" value="1"/>
</dbReference>
<dbReference type="Pfam" id="PF02378">
    <property type="entry name" value="PTS_EIIC"/>
    <property type="match status" value="1"/>
</dbReference>
<dbReference type="SUPFAM" id="SSF55604">
    <property type="entry name" value="Glucose permease domain IIB"/>
    <property type="match status" value="1"/>
</dbReference>
<dbReference type="PROSITE" id="PS51098">
    <property type="entry name" value="PTS_EIIB_TYPE_1"/>
    <property type="match status" value="1"/>
</dbReference>
<dbReference type="PROSITE" id="PS01035">
    <property type="entry name" value="PTS_EIIB_TYPE_1_CYS"/>
    <property type="match status" value="1"/>
</dbReference>
<dbReference type="PROSITE" id="PS51103">
    <property type="entry name" value="PTS_EIIC_TYPE_1"/>
    <property type="match status" value="1"/>
</dbReference>